<evidence type="ECO:0000255" key="1">
    <source>
        <dbReference type="HAMAP-Rule" id="MF_01318"/>
    </source>
</evidence>
<evidence type="ECO:0000305" key="2"/>
<accession>A4WL88</accession>
<organism>
    <name type="scientific">Pyrobaculum arsenaticum (strain DSM 13514 / JCM 11321 / PZ6)</name>
    <dbReference type="NCBI Taxonomy" id="340102"/>
    <lineage>
        <taxon>Archaea</taxon>
        <taxon>Thermoproteota</taxon>
        <taxon>Thermoprotei</taxon>
        <taxon>Thermoproteales</taxon>
        <taxon>Thermoproteaceae</taxon>
        <taxon>Pyrobaculum</taxon>
    </lineage>
</organism>
<dbReference type="EMBL" id="CP000660">
    <property type="protein sequence ID" value="ABP51155.1"/>
    <property type="molecule type" value="Genomic_DNA"/>
</dbReference>
<dbReference type="SMR" id="A4WL88"/>
<dbReference type="STRING" id="340102.Pars_1601"/>
<dbReference type="KEGG" id="pas:Pars_1601"/>
<dbReference type="HOGENOM" id="CLU_062853_4_0_2"/>
<dbReference type="OrthoDB" id="10382at2157"/>
<dbReference type="PhylomeDB" id="A4WL88"/>
<dbReference type="Proteomes" id="UP000001567">
    <property type="component" value="Chromosome"/>
</dbReference>
<dbReference type="GO" id="GO:0015934">
    <property type="term" value="C:large ribosomal subunit"/>
    <property type="evidence" value="ECO:0007669"/>
    <property type="project" value="InterPro"/>
</dbReference>
<dbReference type="GO" id="GO:0019843">
    <property type="term" value="F:rRNA binding"/>
    <property type="evidence" value="ECO:0007669"/>
    <property type="project" value="UniProtKB-UniRule"/>
</dbReference>
<dbReference type="GO" id="GO:0003735">
    <property type="term" value="F:structural constituent of ribosome"/>
    <property type="evidence" value="ECO:0007669"/>
    <property type="project" value="InterPro"/>
</dbReference>
<dbReference type="GO" id="GO:0000049">
    <property type="term" value="F:tRNA binding"/>
    <property type="evidence" value="ECO:0007669"/>
    <property type="project" value="UniProtKB-KW"/>
</dbReference>
<dbReference type="GO" id="GO:0006417">
    <property type="term" value="P:regulation of translation"/>
    <property type="evidence" value="ECO:0007669"/>
    <property type="project" value="UniProtKB-KW"/>
</dbReference>
<dbReference type="GO" id="GO:0006412">
    <property type="term" value="P:translation"/>
    <property type="evidence" value="ECO:0007669"/>
    <property type="project" value="UniProtKB-UniRule"/>
</dbReference>
<dbReference type="CDD" id="cd00403">
    <property type="entry name" value="Ribosomal_L1"/>
    <property type="match status" value="1"/>
</dbReference>
<dbReference type="FunFam" id="3.40.50.790:FF:000005">
    <property type="entry name" value="50S ribosomal protein L1"/>
    <property type="match status" value="1"/>
</dbReference>
<dbReference type="Gene3D" id="3.30.190.20">
    <property type="match status" value="1"/>
</dbReference>
<dbReference type="Gene3D" id="3.40.50.790">
    <property type="match status" value="1"/>
</dbReference>
<dbReference type="HAMAP" id="MF_01318_A">
    <property type="entry name" value="Ribosomal_uL1_A"/>
    <property type="match status" value="1"/>
</dbReference>
<dbReference type="InterPro" id="IPR002143">
    <property type="entry name" value="Ribosomal_uL1"/>
</dbReference>
<dbReference type="InterPro" id="IPR023674">
    <property type="entry name" value="Ribosomal_uL1-like"/>
</dbReference>
<dbReference type="InterPro" id="IPR028364">
    <property type="entry name" value="Ribosomal_uL1/biogenesis"/>
</dbReference>
<dbReference type="InterPro" id="IPR016095">
    <property type="entry name" value="Ribosomal_uL1_3-a/b-sand"/>
</dbReference>
<dbReference type="InterPro" id="IPR023669">
    <property type="entry name" value="Ribosomal_uL1_arc"/>
</dbReference>
<dbReference type="InterPro" id="IPR023673">
    <property type="entry name" value="Ribosomal_uL1_CS"/>
</dbReference>
<dbReference type="NCBIfam" id="NF003244">
    <property type="entry name" value="PRK04203.1"/>
    <property type="match status" value="1"/>
</dbReference>
<dbReference type="PANTHER" id="PTHR36427">
    <property type="entry name" value="54S RIBOSOMAL PROTEIN L1, MITOCHONDRIAL"/>
    <property type="match status" value="1"/>
</dbReference>
<dbReference type="PANTHER" id="PTHR36427:SF3">
    <property type="entry name" value="LARGE RIBOSOMAL SUBUNIT PROTEIN UL1M"/>
    <property type="match status" value="1"/>
</dbReference>
<dbReference type="Pfam" id="PF00687">
    <property type="entry name" value="Ribosomal_L1"/>
    <property type="match status" value="1"/>
</dbReference>
<dbReference type="PIRSF" id="PIRSF002155">
    <property type="entry name" value="Ribosomal_L1"/>
    <property type="match status" value="1"/>
</dbReference>
<dbReference type="SUPFAM" id="SSF56808">
    <property type="entry name" value="Ribosomal protein L1"/>
    <property type="match status" value="1"/>
</dbReference>
<dbReference type="PROSITE" id="PS01199">
    <property type="entry name" value="RIBOSOMAL_L1"/>
    <property type="match status" value="1"/>
</dbReference>
<name>RL1_PYRAR</name>
<sequence>MSVLLNRDVLTSKIAEALKAGKPRRFRQSVELIVVLRELDLSKPENRINLLVELPHPPKANKIAAFAHGVFEVNAKNAGVDAIITRDQIESLSGNKRAIRKLAKQYDFFIAPPDLMPLLGRVVGPIFGPRGKMPEVVPPNVDVKSVVERLRRSVRVRIRNEPVIKVRVGAEGQDQKEILANILTVLEEINRKFSLKQYLKEIYVKKTMGPPIKIRAVEVLSR</sequence>
<proteinExistence type="inferred from homology"/>
<gene>
    <name evidence="1" type="primary">rpl1</name>
    <name type="ordered locus">Pars_1601</name>
</gene>
<comment type="function">
    <text evidence="1">Binds directly to 23S rRNA. Probably involved in E site tRNA release.</text>
</comment>
<comment type="function">
    <text evidence="1">Protein L1 is also a translational repressor protein, it controls the translation of its operon by binding to its mRNA.</text>
</comment>
<comment type="subunit">
    <text evidence="1">Part of the 50S ribosomal subunit.</text>
</comment>
<comment type="similarity">
    <text evidence="1">Belongs to the universal ribosomal protein uL1 family.</text>
</comment>
<protein>
    <recommendedName>
        <fullName evidence="1">Large ribosomal subunit protein uL1</fullName>
    </recommendedName>
    <alternativeName>
        <fullName evidence="2">50S ribosomal protein L1</fullName>
    </alternativeName>
</protein>
<feature type="chain" id="PRO_0000308152" description="Large ribosomal subunit protein uL1">
    <location>
        <begin position="1"/>
        <end position="222"/>
    </location>
</feature>
<reference key="1">
    <citation type="submission" date="2007-04" db="EMBL/GenBank/DDBJ databases">
        <title>Complete sequence of Pyrobaculum arsenaticum DSM 13514.</title>
        <authorList>
            <consortium name="US DOE Joint Genome Institute"/>
            <person name="Copeland A."/>
            <person name="Lucas S."/>
            <person name="Lapidus A."/>
            <person name="Barry K."/>
            <person name="Glavina del Rio T."/>
            <person name="Dalin E."/>
            <person name="Tice H."/>
            <person name="Pitluck S."/>
            <person name="Chain P."/>
            <person name="Malfatti S."/>
            <person name="Shin M."/>
            <person name="Vergez L."/>
            <person name="Schmutz J."/>
            <person name="Larimer F."/>
            <person name="Land M."/>
            <person name="Hauser L."/>
            <person name="Kyrpides N."/>
            <person name="Mikhailova N."/>
            <person name="Cozen A.E."/>
            <person name="Fitz-Gibbon S.T."/>
            <person name="House C.H."/>
            <person name="Saltikov C."/>
            <person name="Lowe T.M."/>
            <person name="Richardson P."/>
        </authorList>
    </citation>
    <scope>NUCLEOTIDE SEQUENCE [LARGE SCALE GENOMIC DNA]</scope>
    <source>
        <strain>ATCC 700994 / DSM 13514 / JCM 11321 / PZ6</strain>
    </source>
</reference>
<keyword id="KW-0678">Repressor</keyword>
<keyword id="KW-0687">Ribonucleoprotein</keyword>
<keyword id="KW-0689">Ribosomal protein</keyword>
<keyword id="KW-0694">RNA-binding</keyword>
<keyword id="KW-0699">rRNA-binding</keyword>
<keyword id="KW-0810">Translation regulation</keyword>
<keyword id="KW-0820">tRNA-binding</keyword>